<keyword id="KW-0472">Membrane</keyword>
<keyword id="KW-0602">Photosynthesis</keyword>
<keyword id="KW-0604">Photosystem II</keyword>
<keyword id="KW-0674">Reaction center</keyword>
<keyword id="KW-1185">Reference proteome</keyword>
<keyword id="KW-0793">Thylakoid</keyword>
<keyword id="KW-0812">Transmembrane</keyword>
<keyword id="KW-1133">Transmembrane helix</keyword>
<organism>
    <name type="scientific">Prochlorococcus marinus (strain SARG / CCMP1375 / SS120)</name>
    <dbReference type="NCBI Taxonomy" id="167539"/>
    <lineage>
        <taxon>Bacteria</taxon>
        <taxon>Bacillati</taxon>
        <taxon>Cyanobacteriota</taxon>
        <taxon>Cyanophyceae</taxon>
        <taxon>Synechococcales</taxon>
        <taxon>Prochlorococcaceae</taxon>
        <taxon>Prochlorococcus</taxon>
    </lineage>
</organism>
<name>PSBI_PROMA</name>
<protein>
    <recommendedName>
        <fullName evidence="1">Photosystem II reaction center protein I</fullName>
        <shortName evidence="1">PSII-I</shortName>
    </recommendedName>
    <alternativeName>
        <fullName evidence="1">PSII 4.4 kDa protein</fullName>
    </alternativeName>
</protein>
<dbReference type="EMBL" id="AE017126">
    <property type="protein sequence ID" value="AAP99331.1"/>
    <property type="molecule type" value="Genomic_DNA"/>
</dbReference>
<dbReference type="RefSeq" id="NP_874679.1">
    <property type="nucleotide sequence ID" value="NC_005042.1"/>
</dbReference>
<dbReference type="RefSeq" id="WP_011124440.1">
    <property type="nucleotide sequence ID" value="NC_005042.1"/>
</dbReference>
<dbReference type="SMR" id="Q7VDT3"/>
<dbReference type="STRING" id="167539.Pro_0285"/>
<dbReference type="EnsemblBacteria" id="AAP99331">
    <property type="protein sequence ID" value="AAP99331"/>
    <property type="gene ID" value="Pro_0285"/>
</dbReference>
<dbReference type="KEGG" id="pma:Pro_0285"/>
<dbReference type="PATRIC" id="fig|167539.5.peg.292"/>
<dbReference type="HOGENOM" id="CLU_212150_0_0_3"/>
<dbReference type="Proteomes" id="UP000001420">
    <property type="component" value="Chromosome"/>
</dbReference>
<dbReference type="GO" id="GO:0009539">
    <property type="term" value="C:photosystem II reaction center"/>
    <property type="evidence" value="ECO:0007669"/>
    <property type="project" value="InterPro"/>
</dbReference>
<dbReference type="GO" id="GO:0031676">
    <property type="term" value="C:plasma membrane-derived thylakoid membrane"/>
    <property type="evidence" value="ECO:0007669"/>
    <property type="project" value="UniProtKB-SubCell"/>
</dbReference>
<dbReference type="GO" id="GO:0015979">
    <property type="term" value="P:photosynthesis"/>
    <property type="evidence" value="ECO:0007669"/>
    <property type="project" value="UniProtKB-UniRule"/>
</dbReference>
<dbReference type="HAMAP" id="MF_01316">
    <property type="entry name" value="PSII_PsbI"/>
    <property type="match status" value="1"/>
</dbReference>
<dbReference type="InterPro" id="IPR003686">
    <property type="entry name" value="PSII_PsbI"/>
</dbReference>
<dbReference type="InterPro" id="IPR037271">
    <property type="entry name" value="PSII_PsbI_sf"/>
</dbReference>
<dbReference type="NCBIfam" id="NF002735">
    <property type="entry name" value="PRK02655.1"/>
    <property type="match status" value="1"/>
</dbReference>
<dbReference type="PANTHER" id="PTHR35772">
    <property type="entry name" value="PHOTOSYSTEM II REACTION CENTER PROTEIN I"/>
    <property type="match status" value="1"/>
</dbReference>
<dbReference type="PANTHER" id="PTHR35772:SF1">
    <property type="entry name" value="PHOTOSYSTEM II REACTION CENTER PROTEIN I"/>
    <property type="match status" value="1"/>
</dbReference>
<dbReference type="Pfam" id="PF02532">
    <property type="entry name" value="PsbI"/>
    <property type="match status" value="1"/>
</dbReference>
<dbReference type="SUPFAM" id="SSF161041">
    <property type="entry name" value="Photosystem II reaction center protein I, PsbI"/>
    <property type="match status" value="1"/>
</dbReference>
<feature type="chain" id="PRO_0000298293" description="Photosystem II reaction center protein I">
    <location>
        <begin position="1"/>
        <end position="42"/>
    </location>
</feature>
<feature type="transmembrane region" description="Helical" evidence="1">
    <location>
        <begin position="6"/>
        <end position="26"/>
    </location>
</feature>
<gene>
    <name evidence="1" type="primary">psbI</name>
    <name type="ordered locus">Pro_0285</name>
</gene>
<accession>Q7VDT3</accession>
<sequence length="42" mass="4725">MLALKISVYTVVFFFVGVFLFGFLASDPTRTPARKDLESPQD</sequence>
<comment type="function">
    <text evidence="1">One of the components of the core complex of photosystem II (PSII), required for its stability and/or assembly. PSII is a light-driven water:plastoquinone oxidoreductase that uses light energy to abstract electrons from H(2)O, generating O(2) and a proton gradient subsequently used for ATP formation. It consists of a core antenna complex that captures photons, and an electron transfer chain that converts photonic excitation into a charge separation.</text>
</comment>
<comment type="subunit">
    <text evidence="2">PSII is composed of 1 copy each of membrane proteins PsbA, PsbB, PsbC, PsbD, PsbE, PsbF, PsbH, PsbI, PsbJ, PsbK, PsbL, PsbM, PsbT, PsbX, PsbY, Psb30/Ycf12, peripheral proteins PsbO, CyanoQ (PsbQ), PsbU, PsbV and a large number of cofactors. It forms dimeric complexes.</text>
</comment>
<comment type="subcellular location">
    <subcellularLocation>
        <location evidence="1">Cellular thylakoid membrane</location>
        <topology evidence="1">Single-pass membrane protein</topology>
    </subcellularLocation>
</comment>
<comment type="similarity">
    <text evidence="1">Belongs to the PsbI family.</text>
</comment>
<evidence type="ECO:0000255" key="1">
    <source>
        <dbReference type="HAMAP-Rule" id="MF_01316"/>
    </source>
</evidence>
<evidence type="ECO:0000305" key="2"/>
<reference key="1">
    <citation type="journal article" date="2003" name="Proc. Natl. Acad. Sci. U.S.A.">
        <title>Genome sequence of the cyanobacterium Prochlorococcus marinus SS120, a nearly minimal oxyphototrophic genome.</title>
        <authorList>
            <person name="Dufresne A."/>
            <person name="Salanoubat M."/>
            <person name="Partensky F."/>
            <person name="Artiguenave F."/>
            <person name="Axmann I.M."/>
            <person name="Barbe V."/>
            <person name="Duprat S."/>
            <person name="Galperin M.Y."/>
            <person name="Koonin E.V."/>
            <person name="Le Gall F."/>
            <person name="Makarova K.S."/>
            <person name="Ostrowski M."/>
            <person name="Oztas S."/>
            <person name="Robert C."/>
            <person name="Rogozin I.B."/>
            <person name="Scanlan D.J."/>
            <person name="Tandeau de Marsac N."/>
            <person name="Weissenbach J."/>
            <person name="Wincker P."/>
            <person name="Wolf Y.I."/>
            <person name="Hess W.R."/>
        </authorList>
    </citation>
    <scope>NUCLEOTIDE SEQUENCE [LARGE SCALE GENOMIC DNA]</scope>
    <source>
        <strain>SARG / CCMP1375 / SS120</strain>
    </source>
</reference>
<proteinExistence type="inferred from homology"/>